<feature type="chain" id="PRO_0000080547" description="Beta-1,4-galactosyltransferase 6">
    <location>
        <begin position="1"/>
        <end position="382"/>
    </location>
</feature>
<feature type="topological domain" description="Cytoplasmic" evidence="5">
    <location>
        <begin position="1"/>
        <end position="14"/>
    </location>
</feature>
<feature type="transmembrane region" description="Helical; Signal-anchor for type II membrane protein" evidence="5">
    <location>
        <begin position="15"/>
        <end position="35"/>
    </location>
</feature>
<feature type="topological domain" description="Lumenal" evidence="5">
    <location>
        <begin position="36"/>
        <end position="382"/>
    </location>
</feature>
<feature type="binding site" evidence="3">
    <location>
        <begin position="163"/>
        <end position="167"/>
    </location>
    <ligand>
        <name>UDP-alpha-D-galactose</name>
        <dbReference type="ChEBI" id="CHEBI:66914"/>
    </ligand>
</feature>
<feature type="binding site" evidence="3">
    <location>
        <begin position="202"/>
        <end position="204"/>
    </location>
    <ligand>
        <name>UDP-alpha-D-galactose</name>
        <dbReference type="ChEBI" id="CHEBI:66914"/>
    </ligand>
</feature>
<feature type="binding site" evidence="3">
    <location>
        <begin position="229"/>
        <end position="230"/>
    </location>
    <ligand>
        <name>UDP-alpha-D-galactose</name>
        <dbReference type="ChEBI" id="CHEBI:66914"/>
    </ligand>
</feature>
<feature type="binding site" evidence="3">
    <location>
        <position position="230"/>
    </location>
    <ligand>
        <name>Mn(2+)</name>
        <dbReference type="ChEBI" id="CHEBI:29035"/>
    </ligand>
</feature>
<feature type="binding site" evidence="3">
    <location>
        <position position="258"/>
    </location>
    <ligand>
        <name>UDP-alpha-D-galactose</name>
        <dbReference type="ChEBI" id="CHEBI:66914"/>
    </ligand>
</feature>
<feature type="binding site" evidence="3">
    <location>
        <position position="290"/>
    </location>
    <ligand>
        <name>UDP-alpha-D-galactose</name>
        <dbReference type="ChEBI" id="CHEBI:66914"/>
    </ligand>
</feature>
<feature type="binding site" evidence="3">
    <location>
        <begin position="292"/>
        <end position="295"/>
    </location>
    <ligand>
        <name>N-acetyl-D-glucosamine</name>
        <dbReference type="ChEBI" id="CHEBI:506227"/>
    </ligand>
</feature>
<feature type="binding site" evidence="3">
    <location>
        <begin position="323"/>
        <end position="324"/>
    </location>
    <ligand>
        <name>UDP-alpha-D-galactose</name>
        <dbReference type="ChEBI" id="CHEBI:66914"/>
    </ligand>
</feature>
<feature type="binding site" evidence="3">
    <location>
        <position position="323"/>
    </location>
    <ligand>
        <name>Mn(2+)</name>
        <dbReference type="ChEBI" id="CHEBI:29035"/>
    </ligand>
</feature>
<feature type="binding site" evidence="3">
    <location>
        <position position="334"/>
    </location>
    <ligand>
        <name>N-acetyl-D-glucosamine</name>
        <dbReference type="ChEBI" id="CHEBI:506227"/>
    </ligand>
</feature>
<feature type="glycosylation site" description="N-linked (GlcNAc...) asparagine" evidence="5">
    <location>
        <position position="71"/>
    </location>
</feature>
<feature type="glycosylation site" description="N-linked (GlcNAc...) asparagine" evidence="5">
    <location>
        <position position="75"/>
    </location>
</feature>
<feature type="glycosylation site" description="N-linked (GlcNAc...) asparagine" evidence="5">
    <location>
        <position position="83"/>
    </location>
</feature>
<feature type="glycosylation site" description="N-linked (GlcNAc...) asparagine" evidence="5">
    <location>
        <position position="84"/>
    </location>
</feature>
<feature type="glycosylation site" description="N-linked (GlcNAc...) asparagine" evidence="5">
    <location>
        <position position="99"/>
    </location>
</feature>
<feature type="glycosylation site" description="N-linked (GlcNAc...) asparagine" evidence="5">
    <location>
        <position position="122"/>
    </location>
</feature>
<feature type="glycosylation site" description="N-linked (GlcNAc...) asparagine" evidence="5">
    <location>
        <position position="307"/>
    </location>
</feature>
<feature type="glycosylation site" description="N-linked (GlcNAc...) asparagine" evidence="5">
    <location>
        <position position="367"/>
    </location>
</feature>
<feature type="disulfide bond" evidence="2">
    <location>
        <begin position="108"/>
        <end position="152"/>
    </location>
</feature>
<feature type="disulfide bond" evidence="2">
    <location>
        <begin position="223"/>
        <end position="242"/>
    </location>
</feature>
<feature type="splice variant" id="VSP_056554" description="In isoform 2." evidence="9">
    <location>
        <begin position="158"/>
        <end position="196"/>
    </location>
</feature>
<feature type="sequence variant" id="VAR_054023" description="In dbSNP:rs34683195.">
    <original>I</original>
    <variation>V</variation>
    <location>
        <position position="379"/>
    </location>
</feature>
<feature type="sequence conflict" description="In Ref. 1; AAC39737." evidence="12" ref="1">
    <original>I</original>
    <variation>V</variation>
    <location>
        <position position="194"/>
    </location>
</feature>
<organism>
    <name type="scientific">Homo sapiens</name>
    <name type="common">Human</name>
    <dbReference type="NCBI Taxonomy" id="9606"/>
    <lineage>
        <taxon>Eukaryota</taxon>
        <taxon>Metazoa</taxon>
        <taxon>Chordata</taxon>
        <taxon>Craniata</taxon>
        <taxon>Vertebrata</taxon>
        <taxon>Euteleostomi</taxon>
        <taxon>Mammalia</taxon>
        <taxon>Eutheria</taxon>
        <taxon>Euarchontoglires</taxon>
        <taxon>Primates</taxon>
        <taxon>Haplorrhini</taxon>
        <taxon>Catarrhini</taxon>
        <taxon>Hominidae</taxon>
        <taxon>Homo</taxon>
    </lineage>
</organism>
<gene>
    <name evidence="14" type="primary">B4GALT6</name>
</gene>
<sequence>MSVLRRMMRVSNRSLLAFIFFFSLSSSCLYFIYVAPGIANTYLFMVQARGIMLRENVKTIGHMIRLYTNKNSTLNGTDYPEGNNSSDYLVQTTTYLPENFTYSPYLPCPEKLPYMRGFLNVNVSEVSFDEIHQLFSKDLDIEPGGHWRPKDCKPRWKVAVLIPFRNRHEHLPIFFLHLIPMLQKQRLEFAFYVIEQTGTQPFNRAMLFNVGFKEAMKDSVWDCVIFHDVDHLPENDRNYYGCGEMPRHFAAKLDKYMYILPYKEFFGGVSGLTVEQFRKINGFPNAFWGWGGEDDDLWNRVHYAGYNVTRPEGDLGKYKSIPHHHRGEVQFLGRYKLLRYSKERQYIDGLNNLIYRPKILVDRLYTNISVNLMPELAPIEDY</sequence>
<name>B4GT6_HUMAN</name>
<comment type="function">
    <text evidence="4 6 7 8">Catalyzes the synthesis of lactosylceramide (LacCer) via the transfer of galactose from UDP-galactose to glucosylceramide (GlcCer) (PubMed:1551920, PubMed:24498430, PubMed:3099851). LacCer is the starting point in the biosynthesis of all gangliosides (membrane-bound glycosphingolipids) which play pivotal roles in the CNS including neuronal maturation and axonal and myelin formation (By similarity).</text>
</comment>
<comment type="catalytic activity">
    <reaction evidence="6 7 8">
        <text>a beta-D-glucosyl-(1&lt;-&gt;1')-N-acylsphing-4-enine + UDP-alpha-D-galactose = a beta-D-Gal-(1-&gt;4)-beta-D-Glc-(1&lt;-&gt;1)-Cer(d18:1(4E)) + UDP + H(+)</text>
        <dbReference type="Rhea" id="RHEA:31495"/>
        <dbReference type="ChEBI" id="CHEBI:15378"/>
        <dbReference type="ChEBI" id="CHEBI:17950"/>
        <dbReference type="ChEBI" id="CHEBI:22801"/>
        <dbReference type="ChEBI" id="CHEBI:58223"/>
        <dbReference type="ChEBI" id="CHEBI:66914"/>
        <dbReference type="EC" id="2.4.1.274"/>
    </reaction>
    <physiologicalReaction direction="left-to-right" evidence="13">
        <dbReference type="Rhea" id="RHEA:31496"/>
    </physiologicalReaction>
</comment>
<comment type="cofactor">
    <cofactor evidence="8">
        <name>Mn(2+)</name>
        <dbReference type="ChEBI" id="CHEBI:29035"/>
    </cofactor>
    <cofactor evidence="8">
        <name>Mg(2+)</name>
        <dbReference type="ChEBI" id="CHEBI:18420"/>
    </cofactor>
</comment>
<comment type="activity regulation">
    <text evidence="1">Inhibited by EDTA.</text>
</comment>
<comment type="biophysicochemical properties">
    <kinetics>
        <KM evidence="8">3 uM for glucosylceramide</KM>
        <KM evidence="8">0.5 uM for UDP-galactose</KM>
        <Vmax evidence="8">0.06 nmol/h/mg enzyme toward glucosylceramide</Vmax>
        <Vmax evidence="8">86.0 nmol/h/mg enzyme toward UDP-galactose</Vmax>
    </kinetics>
</comment>
<comment type="pathway">
    <text>Protein modification; protein glycosylation.</text>
</comment>
<comment type="pathway">
    <text>Sphingolipid metabolism.</text>
</comment>
<comment type="interaction">
    <interactant intactId="EBI-21514152">
        <id>Q9UBX8</id>
    </interactant>
    <interactant intactId="EBI-713521">
        <id>P49641</id>
        <label>MAN2A2</label>
    </interactant>
    <organismsDiffer>false</organismsDiffer>
    <experiments>2</experiments>
</comment>
<comment type="subcellular location">
    <subcellularLocation>
        <location evidence="2">Golgi apparatus</location>
        <location evidence="2">Golgi stack membrane</location>
        <topology>Single-pass type II membrane protein</topology>
    </subcellularLocation>
    <text evidence="2">Trans cisternae of Golgi stack.</text>
</comment>
<comment type="alternative products">
    <event type="alternative splicing"/>
    <isoform>
        <id>Q9UBX8-1</id>
        <name>1</name>
        <sequence type="displayed"/>
    </isoform>
    <isoform>
        <id>Q9UBX8-2</id>
        <name>2</name>
        <sequence type="described" ref="VSP_056554"/>
    </isoform>
</comment>
<comment type="tissue specificity">
    <text>High expression in brain and adrenal gland, lower in liver, lung, colon and peripheral white blood cells.</text>
</comment>
<comment type="similarity">
    <text evidence="12">Belongs to the glycosyltransferase 7 family.</text>
</comment>
<comment type="online information" name="Functional Glycomics Gateway - GTase">
    <link uri="http://www.functionalglycomics.org/glycomics/molecule/jsp/glycoEnzyme/viewGlycoEnzyme.jsp?gbpId=gt_hum_441"/>
    <text>Beta-1,4-galactosyltransferase 6</text>
</comment>
<keyword id="KW-0025">Alternative splicing</keyword>
<keyword id="KW-0106">Calcium</keyword>
<keyword id="KW-1015">Disulfide bond</keyword>
<keyword id="KW-0325">Glycoprotein</keyword>
<keyword id="KW-0328">Glycosyltransferase</keyword>
<keyword id="KW-0333">Golgi apparatus</keyword>
<keyword id="KW-0444">Lipid biosynthesis</keyword>
<keyword id="KW-0443">Lipid metabolism</keyword>
<keyword id="KW-0460">Magnesium</keyword>
<keyword id="KW-0464">Manganese</keyword>
<keyword id="KW-0472">Membrane</keyword>
<keyword id="KW-0479">Metal-binding</keyword>
<keyword id="KW-1267">Proteomics identification</keyword>
<keyword id="KW-1185">Reference proteome</keyword>
<keyword id="KW-0735">Signal-anchor</keyword>
<keyword id="KW-0746">Sphingolipid metabolism</keyword>
<keyword id="KW-0808">Transferase</keyword>
<keyword id="KW-0812">Transmembrane</keyword>
<keyword id="KW-1133">Transmembrane helix</keyword>
<evidence type="ECO:0000250" key="1">
    <source>
        <dbReference type="UniProtKB" id="O88419"/>
    </source>
</evidence>
<evidence type="ECO:0000250" key="2">
    <source>
        <dbReference type="UniProtKB" id="P15291"/>
    </source>
</evidence>
<evidence type="ECO:0000250" key="3">
    <source>
        <dbReference type="UniProtKB" id="Q9UBV7"/>
    </source>
</evidence>
<evidence type="ECO:0000250" key="4">
    <source>
        <dbReference type="UniProtKB" id="Q9WVK5"/>
    </source>
</evidence>
<evidence type="ECO:0000255" key="5"/>
<evidence type="ECO:0000269" key="6">
    <source>
    </source>
</evidence>
<evidence type="ECO:0000269" key="7">
    <source>
    </source>
</evidence>
<evidence type="ECO:0000269" key="8">
    <source>
    </source>
</evidence>
<evidence type="ECO:0000303" key="9">
    <source>
    </source>
</evidence>
<evidence type="ECO:0000303" key="10">
    <source>
    </source>
</evidence>
<evidence type="ECO:0000303" key="11">
    <source>
    </source>
</evidence>
<evidence type="ECO:0000305" key="12"/>
<evidence type="ECO:0000305" key="13">
    <source>
    </source>
</evidence>
<evidence type="ECO:0000312" key="14">
    <source>
        <dbReference type="HGNC" id="HGNC:929"/>
    </source>
</evidence>
<protein>
    <recommendedName>
        <fullName evidence="12">Beta-1,4-galactosyltransferase 6</fullName>
        <shortName>Beta-1,4-GalTase 6</shortName>
        <shortName>Beta4Gal-T6</shortName>
        <shortName>b4Gal-T6</shortName>
        <ecNumber>2.4.1.-</ecNumber>
    </recommendedName>
    <alternativeName>
        <fullName>Glucosylceramide beta-1,4-galactosyltransferase</fullName>
        <ecNumber evidence="6 8">2.4.1.274</ecNumber>
    </alternativeName>
    <alternativeName>
        <fullName evidence="10">Lactosylceramide synthase</fullName>
        <shortName evidence="10">LacCer synthase</shortName>
    </alternativeName>
    <alternativeName>
        <fullName>UDP-Gal:beta-GlcNAc beta-1,4-galactosyltransferase 6</fullName>
    </alternativeName>
    <alternativeName>
        <fullName evidence="11">UDP-Gal:glucosylceramide beta-1,4-galactosyltransferase</fullName>
    </alternativeName>
    <alternativeName>
        <fullName>UDP-galactose:beta-N-acetylglucosamine beta-1,4-galactosyltransferase 6</fullName>
    </alternativeName>
</protein>
<dbReference type="EC" id="2.4.1.-"/>
<dbReference type="EC" id="2.4.1.274" evidence="6 8"/>
<dbReference type="EMBL" id="AF038664">
    <property type="protein sequence ID" value="AAC39737.1"/>
    <property type="molecule type" value="mRNA"/>
</dbReference>
<dbReference type="EMBL" id="AF097159">
    <property type="protein sequence ID" value="AAD41695.1"/>
    <property type="molecule type" value="mRNA"/>
</dbReference>
<dbReference type="EMBL" id="AB024742">
    <property type="protein sequence ID" value="BAA76273.2"/>
    <property type="molecule type" value="mRNA"/>
</dbReference>
<dbReference type="EMBL" id="AC017100">
    <property type="status" value="NOT_ANNOTATED_CDS"/>
    <property type="molecule type" value="Genomic_DNA"/>
</dbReference>
<dbReference type="EMBL" id="CH471088">
    <property type="protein sequence ID" value="EAX01269.1"/>
    <property type="molecule type" value="Genomic_DNA"/>
</dbReference>
<dbReference type="EMBL" id="BC069620">
    <property type="protein sequence ID" value="AAH69620.1"/>
    <property type="molecule type" value="mRNA"/>
</dbReference>
<dbReference type="EMBL" id="BC074835">
    <property type="protein sequence ID" value="AAH74835.1"/>
    <property type="molecule type" value="mRNA"/>
</dbReference>
<dbReference type="EMBL" id="BC074884">
    <property type="protein sequence ID" value="AAH74884.1"/>
    <property type="molecule type" value="mRNA"/>
</dbReference>
<dbReference type="CCDS" id="CCDS11900.1">
    <molecule id="Q9UBX8-1"/>
</dbReference>
<dbReference type="RefSeq" id="NP_001317499.1">
    <property type="nucleotide sequence ID" value="NM_001330570.1"/>
</dbReference>
<dbReference type="RefSeq" id="NP_004766.2">
    <molecule id="Q9UBX8-1"/>
    <property type="nucleotide sequence ID" value="NM_004775.5"/>
</dbReference>
<dbReference type="SMR" id="Q9UBX8"/>
<dbReference type="BioGRID" id="114740">
    <property type="interactions" value="25"/>
</dbReference>
<dbReference type="FunCoup" id="Q9UBX8">
    <property type="interactions" value="432"/>
</dbReference>
<dbReference type="IntAct" id="Q9UBX8">
    <property type="interactions" value="21"/>
</dbReference>
<dbReference type="STRING" id="9606.ENSP00000306459"/>
<dbReference type="SwissLipids" id="SLP:000001379">
    <molecule id="Q9UBX8-1"/>
</dbReference>
<dbReference type="CAZy" id="GT7">
    <property type="family name" value="Glycosyltransferase Family 7"/>
</dbReference>
<dbReference type="GlyCosmos" id="Q9UBX8">
    <property type="glycosylation" value="8 sites, No reported glycans"/>
</dbReference>
<dbReference type="GlyGen" id="Q9UBX8">
    <property type="glycosylation" value="8 sites, 1 N-linked glycan (1 site)"/>
</dbReference>
<dbReference type="iPTMnet" id="Q9UBX8"/>
<dbReference type="PhosphoSitePlus" id="Q9UBX8"/>
<dbReference type="BioMuta" id="B4GALT6"/>
<dbReference type="DMDM" id="13123991"/>
<dbReference type="jPOST" id="Q9UBX8"/>
<dbReference type="MassIVE" id="Q9UBX8"/>
<dbReference type="PaxDb" id="9606-ENSP00000306459"/>
<dbReference type="PeptideAtlas" id="Q9UBX8"/>
<dbReference type="ProteomicsDB" id="66651"/>
<dbReference type="ProteomicsDB" id="84097">
    <molecule id="Q9UBX8-1"/>
</dbReference>
<dbReference type="Antibodypedia" id="41869">
    <property type="antibodies" value="113 antibodies from 27 providers"/>
</dbReference>
<dbReference type="DNASU" id="9331"/>
<dbReference type="Ensembl" id="ENST00000306851.10">
    <molecule id="Q9UBX8-1"/>
    <property type="protein sequence ID" value="ENSP00000306459.5"/>
    <property type="gene ID" value="ENSG00000118276.12"/>
</dbReference>
<dbReference type="Ensembl" id="ENST00000383131.3">
    <molecule id="Q9UBX8-2"/>
    <property type="protein sequence ID" value="ENSP00000372613.3"/>
    <property type="gene ID" value="ENSG00000118276.12"/>
</dbReference>
<dbReference type="GeneID" id="9331"/>
<dbReference type="KEGG" id="hsa:9331"/>
<dbReference type="MANE-Select" id="ENST00000306851.10">
    <property type="protein sequence ID" value="ENSP00000306459.5"/>
    <property type="RefSeq nucleotide sequence ID" value="NM_004775.5"/>
    <property type="RefSeq protein sequence ID" value="NP_004766.2"/>
</dbReference>
<dbReference type="UCSC" id="uc002kwz.5">
    <molecule id="Q9UBX8-1"/>
    <property type="organism name" value="human"/>
</dbReference>
<dbReference type="AGR" id="HGNC:929"/>
<dbReference type="CTD" id="9331"/>
<dbReference type="DisGeNET" id="9331"/>
<dbReference type="GeneCards" id="B4GALT6"/>
<dbReference type="HGNC" id="HGNC:929">
    <property type="gene designation" value="B4GALT6"/>
</dbReference>
<dbReference type="HPA" id="ENSG00000118276">
    <property type="expression patterns" value="Tissue enhanced (retina)"/>
</dbReference>
<dbReference type="MIM" id="604017">
    <property type="type" value="gene"/>
</dbReference>
<dbReference type="neXtProt" id="NX_Q9UBX8"/>
<dbReference type="OpenTargets" id="ENSG00000118276"/>
<dbReference type="PharmGKB" id="PA25228"/>
<dbReference type="VEuPathDB" id="HostDB:ENSG00000118276"/>
<dbReference type="eggNOG" id="KOG3916">
    <property type="taxonomic scope" value="Eukaryota"/>
</dbReference>
<dbReference type="GeneTree" id="ENSGT00940000158138"/>
<dbReference type="InParanoid" id="Q9UBX8"/>
<dbReference type="OMA" id="VVWDCII"/>
<dbReference type="OrthoDB" id="10038994at2759"/>
<dbReference type="PAN-GO" id="Q9UBX8">
    <property type="GO annotations" value="4 GO annotations based on evolutionary models"/>
</dbReference>
<dbReference type="PhylomeDB" id="Q9UBX8"/>
<dbReference type="TreeFam" id="TF312834"/>
<dbReference type="BioCyc" id="MetaCyc:ENSG00000118276-MONOMER"/>
<dbReference type="BRENDA" id="2.4.1.274">
    <property type="organism ID" value="2681"/>
</dbReference>
<dbReference type="PathwayCommons" id="Q9UBX8"/>
<dbReference type="Reactome" id="R-HSA-2022854">
    <property type="pathway name" value="Keratan sulfate biosynthesis"/>
</dbReference>
<dbReference type="Reactome" id="R-HSA-913709">
    <property type="pathway name" value="O-linked glycosylation of mucins"/>
</dbReference>
<dbReference type="Reactome" id="R-HSA-975577">
    <property type="pathway name" value="N-Glycan antennae elongation"/>
</dbReference>
<dbReference type="Reactome" id="R-HSA-9840309">
    <property type="pathway name" value="Glycosphingolipid biosynthesis"/>
</dbReference>
<dbReference type="SABIO-RK" id="Q9UBX8"/>
<dbReference type="SignaLink" id="Q9UBX8"/>
<dbReference type="UniPathway" id="UPA00378"/>
<dbReference type="BioGRID-ORCS" id="9331">
    <property type="hits" value="14 hits in 1144 CRISPR screens"/>
</dbReference>
<dbReference type="ChiTaRS" id="B4GALT6">
    <property type="organism name" value="human"/>
</dbReference>
<dbReference type="GenomeRNAi" id="9331"/>
<dbReference type="Pharos" id="Q9UBX8">
    <property type="development level" value="Tbio"/>
</dbReference>
<dbReference type="PRO" id="PR:Q9UBX8"/>
<dbReference type="Proteomes" id="UP000005640">
    <property type="component" value="Chromosome 18"/>
</dbReference>
<dbReference type="RNAct" id="Q9UBX8">
    <property type="molecule type" value="protein"/>
</dbReference>
<dbReference type="Bgee" id="ENSG00000118276">
    <property type="expression patterns" value="Expressed in lateral nuclear group of thalamus and 184 other cell types or tissues"/>
</dbReference>
<dbReference type="ExpressionAtlas" id="Q9UBX8">
    <property type="expression patterns" value="baseline and differential"/>
</dbReference>
<dbReference type="GO" id="GO:0005794">
    <property type="term" value="C:Golgi apparatus"/>
    <property type="evidence" value="ECO:0000318"/>
    <property type="project" value="GO_Central"/>
</dbReference>
<dbReference type="GO" id="GO:0032580">
    <property type="term" value="C:Golgi cisterna membrane"/>
    <property type="evidence" value="ECO:0007669"/>
    <property type="project" value="UniProtKB-SubCell"/>
</dbReference>
<dbReference type="GO" id="GO:0000139">
    <property type="term" value="C:Golgi membrane"/>
    <property type="evidence" value="ECO:0000304"/>
    <property type="project" value="Reactome"/>
</dbReference>
<dbReference type="GO" id="GO:0008378">
    <property type="term" value="F:galactosyltransferase activity"/>
    <property type="evidence" value="ECO:0000314"/>
    <property type="project" value="BHF-UCL"/>
</dbReference>
<dbReference type="GO" id="GO:0046872">
    <property type="term" value="F:metal ion binding"/>
    <property type="evidence" value="ECO:0007669"/>
    <property type="project" value="UniProtKB-KW"/>
</dbReference>
<dbReference type="GO" id="GO:0008489">
    <property type="term" value="F:UDP-galactose:glucosylceramide beta-1,4-galactosyltransferase activity"/>
    <property type="evidence" value="ECO:0000315"/>
    <property type="project" value="UniProtKB"/>
</dbReference>
<dbReference type="GO" id="GO:0005975">
    <property type="term" value="P:carbohydrate metabolic process"/>
    <property type="evidence" value="ECO:0007669"/>
    <property type="project" value="InterPro"/>
</dbReference>
<dbReference type="GO" id="GO:0022010">
    <property type="term" value="P:central nervous system myelination"/>
    <property type="evidence" value="ECO:0000250"/>
    <property type="project" value="UniProtKB"/>
</dbReference>
<dbReference type="GO" id="GO:0021955">
    <property type="term" value="P:central nervous system neuron axonogenesis"/>
    <property type="evidence" value="ECO:0000250"/>
    <property type="project" value="UniProtKB"/>
</dbReference>
<dbReference type="GO" id="GO:0010706">
    <property type="term" value="P:ganglioside biosynthetic process via lactosylceramide"/>
    <property type="evidence" value="ECO:0000250"/>
    <property type="project" value="UniProtKB"/>
</dbReference>
<dbReference type="GO" id="GO:0006688">
    <property type="term" value="P:glycosphingolipid biosynthetic process"/>
    <property type="evidence" value="ECO:0000318"/>
    <property type="project" value="GO_Central"/>
</dbReference>
<dbReference type="GO" id="GO:0070085">
    <property type="term" value="P:glycosylation"/>
    <property type="evidence" value="ECO:0000318"/>
    <property type="project" value="GO_Central"/>
</dbReference>
<dbReference type="GO" id="GO:0001572">
    <property type="term" value="P:lactosylceramide biosynthetic process"/>
    <property type="evidence" value="ECO:0000314"/>
    <property type="project" value="BHF-UCL"/>
</dbReference>
<dbReference type="GO" id="GO:0042551">
    <property type="term" value="P:neuron maturation"/>
    <property type="evidence" value="ECO:0000250"/>
    <property type="project" value="UniProtKB"/>
</dbReference>
<dbReference type="GO" id="GO:0006486">
    <property type="term" value="P:protein glycosylation"/>
    <property type="evidence" value="ECO:0007669"/>
    <property type="project" value="UniProtKB-UniPathway"/>
</dbReference>
<dbReference type="CDD" id="cd00899">
    <property type="entry name" value="b4GalT"/>
    <property type="match status" value="1"/>
</dbReference>
<dbReference type="FunFam" id="3.90.550.10:FF:000037">
    <property type="entry name" value="Beta-1,4-galactosyltransferase 6"/>
    <property type="match status" value="1"/>
</dbReference>
<dbReference type="Gene3D" id="3.90.550.10">
    <property type="entry name" value="Spore Coat Polysaccharide Biosynthesis Protein SpsA, Chain A"/>
    <property type="match status" value="1"/>
</dbReference>
<dbReference type="InterPro" id="IPR003859">
    <property type="entry name" value="Galactosyl_T"/>
</dbReference>
<dbReference type="InterPro" id="IPR027791">
    <property type="entry name" value="Galactosyl_T_C"/>
</dbReference>
<dbReference type="InterPro" id="IPR027995">
    <property type="entry name" value="Galactosyl_T_N"/>
</dbReference>
<dbReference type="InterPro" id="IPR029044">
    <property type="entry name" value="Nucleotide-diphossugar_trans"/>
</dbReference>
<dbReference type="PANTHER" id="PTHR19300">
    <property type="entry name" value="BETA-1,4-GALACTOSYLTRANSFERASE"/>
    <property type="match status" value="1"/>
</dbReference>
<dbReference type="PANTHER" id="PTHR19300:SF47">
    <property type="entry name" value="BETA-1,4-GALACTOSYLTRANSFERASE 6"/>
    <property type="match status" value="1"/>
</dbReference>
<dbReference type="Pfam" id="PF02709">
    <property type="entry name" value="Glyco_transf_7C"/>
    <property type="match status" value="1"/>
</dbReference>
<dbReference type="Pfam" id="PF13733">
    <property type="entry name" value="Glyco_transf_7N"/>
    <property type="match status" value="1"/>
</dbReference>
<dbReference type="PRINTS" id="PR02050">
    <property type="entry name" value="B14GALTRFASE"/>
</dbReference>
<dbReference type="SUPFAM" id="SSF53448">
    <property type="entry name" value="Nucleotide-diphospho-sugar transferases"/>
    <property type="match status" value="1"/>
</dbReference>
<reference key="1">
    <citation type="journal article" date="1998" name="Glycobiology">
        <title>The expanding beta 4-galactosyltransferase gene family: messages from the databanks.</title>
        <authorList>
            <person name="Lo N.-W."/>
            <person name="Shaper J.H."/>
            <person name="Pevsner J."/>
            <person name="Shaper N.L."/>
        </authorList>
    </citation>
    <scope>NUCLEOTIDE SEQUENCE [MRNA] (ISOFORM 1)</scope>
</reference>
<reference key="2">
    <citation type="journal article" date="1999" name="Biochim. Biophys. Acta">
        <title>cDNA cloning and expression of human lactosylceramide synthase.</title>
        <authorList>
            <person name="Takizawa M."/>
            <person name="Nomura T."/>
            <person name="Wakisaka E."/>
            <person name="Yoshizuka N."/>
            <person name="Aoki J."/>
            <person name="Arai H."/>
            <person name="Inoue K."/>
            <person name="Hattori M."/>
            <person name="Matsuo N."/>
        </authorList>
    </citation>
    <scope>NUCLEOTIDE SEQUENCE [MRNA] (ISOFORM 1)</scope>
    <source>
        <tissue>Brain</tissue>
    </source>
</reference>
<reference key="3">
    <citation type="submission" date="1999-03" db="EMBL/GenBank/DDBJ databases">
        <title>Human beta-1,4-galactosyltransferase VI.</title>
        <authorList>
            <person name="Sato T."/>
        </authorList>
    </citation>
    <scope>NUCLEOTIDE SEQUENCE [MRNA] (ISOFORM 1)</scope>
</reference>
<reference key="4">
    <citation type="journal article" date="2005" name="Nature">
        <title>DNA sequence and analysis of human chromosome 18.</title>
        <authorList>
            <person name="Nusbaum C."/>
            <person name="Zody M.C."/>
            <person name="Borowsky M.L."/>
            <person name="Kamal M."/>
            <person name="Kodira C.D."/>
            <person name="Taylor T.D."/>
            <person name="Whittaker C.A."/>
            <person name="Chang J.L."/>
            <person name="Cuomo C.A."/>
            <person name="Dewar K."/>
            <person name="FitzGerald M.G."/>
            <person name="Yang X."/>
            <person name="Abouelleil A."/>
            <person name="Allen N.R."/>
            <person name="Anderson S."/>
            <person name="Bloom T."/>
            <person name="Bugalter B."/>
            <person name="Butler J."/>
            <person name="Cook A."/>
            <person name="DeCaprio D."/>
            <person name="Engels R."/>
            <person name="Garber M."/>
            <person name="Gnirke A."/>
            <person name="Hafez N."/>
            <person name="Hall J.L."/>
            <person name="Norman C.H."/>
            <person name="Itoh T."/>
            <person name="Jaffe D.B."/>
            <person name="Kuroki Y."/>
            <person name="Lehoczky J."/>
            <person name="Lui A."/>
            <person name="Macdonald P."/>
            <person name="Mauceli E."/>
            <person name="Mikkelsen T.S."/>
            <person name="Naylor J.W."/>
            <person name="Nicol R."/>
            <person name="Nguyen C."/>
            <person name="Noguchi H."/>
            <person name="O'Leary S.B."/>
            <person name="Piqani B."/>
            <person name="Smith C.L."/>
            <person name="Talamas J.A."/>
            <person name="Topham K."/>
            <person name="Totoki Y."/>
            <person name="Toyoda A."/>
            <person name="Wain H.M."/>
            <person name="Young S.K."/>
            <person name="Zeng Q."/>
            <person name="Zimmer A.R."/>
            <person name="Fujiyama A."/>
            <person name="Hattori M."/>
            <person name="Birren B.W."/>
            <person name="Sakaki Y."/>
            <person name="Lander E.S."/>
        </authorList>
    </citation>
    <scope>NUCLEOTIDE SEQUENCE [LARGE SCALE GENOMIC DNA]</scope>
</reference>
<reference key="5">
    <citation type="submission" date="2005-09" db="EMBL/GenBank/DDBJ databases">
        <authorList>
            <person name="Mural R.J."/>
            <person name="Istrail S."/>
            <person name="Sutton G."/>
            <person name="Florea L."/>
            <person name="Halpern A.L."/>
            <person name="Mobarry C.M."/>
            <person name="Lippert R."/>
            <person name="Walenz B."/>
            <person name="Shatkay H."/>
            <person name="Dew I."/>
            <person name="Miller J.R."/>
            <person name="Flanigan M.J."/>
            <person name="Edwards N.J."/>
            <person name="Bolanos R."/>
            <person name="Fasulo D."/>
            <person name="Halldorsson B.V."/>
            <person name="Hannenhalli S."/>
            <person name="Turner R."/>
            <person name="Yooseph S."/>
            <person name="Lu F."/>
            <person name="Nusskern D.R."/>
            <person name="Shue B.C."/>
            <person name="Zheng X.H."/>
            <person name="Zhong F."/>
            <person name="Delcher A.L."/>
            <person name="Huson D.H."/>
            <person name="Kravitz S.A."/>
            <person name="Mouchard L."/>
            <person name="Reinert K."/>
            <person name="Remington K.A."/>
            <person name="Clark A.G."/>
            <person name="Waterman M.S."/>
            <person name="Eichler E.E."/>
            <person name="Adams M.D."/>
            <person name="Hunkapiller M.W."/>
            <person name="Myers E.W."/>
            <person name="Venter J.C."/>
        </authorList>
    </citation>
    <scope>NUCLEOTIDE SEQUENCE [LARGE SCALE GENOMIC DNA]</scope>
</reference>
<reference key="6">
    <citation type="journal article" date="2004" name="Genome Res.">
        <title>The status, quality, and expansion of the NIH full-length cDNA project: the Mammalian Gene Collection (MGC).</title>
        <authorList>
            <consortium name="The MGC Project Team"/>
        </authorList>
    </citation>
    <scope>NUCLEOTIDE SEQUENCE [LARGE SCALE MRNA] (ISOFORMS 1 AND 2)</scope>
    <source>
        <tissue>Lung</tissue>
    </source>
</reference>
<reference key="7">
    <citation type="journal article" date="1987" name="Biochim. Biophys. Acta">
        <title>UDPgalactose:glucosylceramide beta 1-&gt;4-galactosyltransferase activity in human proximal tubular cells from normal and familial hypercholesterolemic homozygotes.</title>
        <authorList>
            <person name="Chatterjee S."/>
            <person name="Castiglione E."/>
        </authorList>
    </citation>
    <scope>FUNCTION AS GLUCOSYLCERAMIDE BETA-1,4-GALACTOSYLTRANSFERASE</scope>
    <scope>CATALYTIC ACTIVITY</scope>
    <scope>COFACTOR</scope>
    <scope>BIOPHYSICOCHEMICAL PROPERTIES</scope>
</reference>
<reference key="8">
    <citation type="journal article" date="1992" name="J. Biol. Chem.">
        <title>Purification of uridine diphosphate-galactose:glucosyl ceramide, beta 1-4 galactosyltransferase from human kidney.</title>
        <authorList>
            <person name="Chatterjee S."/>
            <person name="Ghosh N."/>
            <person name="Khurana S."/>
        </authorList>
    </citation>
    <scope>FUNCTION AS GLUCOSYLCERAMIDE BETA-1,4-GALACTOSYLTRANSFERASE</scope>
    <scope>CATALYTIC ACTIVITY</scope>
</reference>
<reference key="9">
    <citation type="journal article" date="1999" name="Biochim. Biophys. Acta">
        <title>Identification and characterization of large galactosyltransferase gene families: galactosyltransferases for all functions.</title>
        <authorList>
            <person name="Amado M."/>
            <person name="Almeida R."/>
            <person name="Schwientek T."/>
            <person name="Clausen H."/>
        </authorList>
    </citation>
    <scope>REVIEW</scope>
</reference>
<reference key="10">
    <citation type="journal article" date="2014" name="PLoS ONE">
        <title>Establishment of HeLa cell mutants deficient in sphingolipid-related genes using TALENs.</title>
        <authorList>
            <person name="Yamaji T."/>
            <person name="Hanada K."/>
        </authorList>
    </citation>
    <scope>FUNCTION AS GLUCOSYLCERAMIDE BETA-1,4-GALACTOSYLTRANSFERASE</scope>
</reference>
<proteinExistence type="evidence at protein level"/>
<accession>Q9UBX8</accession>
<accession>O60514</accession>
<accession>Q6NT09</accession>